<keyword id="KW-0001">2Fe-2S</keyword>
<keyword id="KW-0004">4Fe-4S</keyword>
<keyword id="KW-0963">Cytoplasm</keyword>
<keyword id="KW-0408">Iron</keyword>
<keyword id="KW-0411">Iron-sulfur</keyword>
<keyword id="KW-0479">Metal-binding</keyword>
<keyword id="KW-0496">Mitochondrion</keyword>
<keyword id="KW-1185">Reference proteome</keyword>
<evidence type="ECO:0000255" key="1">
    <source>
        <dbReference type="HAMAP-Rule" id="MF_03115"/>
    </source>
</evidence>
<accession>B4JAX0</accession>
<dbReference type="EMBL" id="CH916368">
    <property type="protein sequence ID" value="EDW02840.1"/>
    <property type="molecule type" value="Genomic_DNA"/>
</dbReference>
<dbReference type="SMR" id="B4JAX0"/>
<dbReference type="FunCoup" id="B4JAX0">
    <property type="interactions" value="2188"/>
</dbReference>
<dbReference type="STRING" id="7222.B4JAX0"/>
<dbReference type="EnsemblMetazoa" id="FBtr0146234">
    <property type="protein sequence ID" value="FBpp0144726"/>
    <property type="gene ID" value="FBgn0118301"/>
</dbReference>
<dbReference type="EnsemblMetazoa" id="XM_001987937.2">
    <property type="protein sequence ID" value="XP_001987973.1"/>
    <property type="gene ID" value="LOC6562919"/>
</dbReference>
<dbReference type="GeneID" id="6562919"/>
<dbReference type="KEGG" id="dgr:6562919"/>
<dbReference type="CTD" id="57019"/>
<dbReference type="eggNOG" id="KOG4020">
    <property type="taxonomic scope" value="Eukaryota"/>
</dbReference>
<dbReference type="HOGENOM" id="CLU_064393_1_0_1"/>
<dbReference type="InParanoid" id="B4JAX0"/>
<dbReference type="OMA" id="GFINCRE"/>
<dbReference type="OrthoDB" id="311633at2759"/>
<dbReference type="PhylomeDB" id="B4JAX0"/>
<dbReference type="Proteomes" id="UP000001070">
    <property type="component" value="Unassembled WGS sequence"/>
</dbReference>
<dbReference type="GO" id="GO:0005758">
    <property type="term" value="C:mitochondrial intermembrane space"/>
    <property type="evidence" value="ECO:0007669"/>
    <property type="project" value="UniProtKB-SubCell"/>
</dbReference>
<dbReference type="GO" id="GO:0051537">
    <property type="term" value="F:2 iron, 2 sulfur cluster binding"/>
    <property type="evidence" value="ECO:0007669"/>
    <property type="project" value="UniProtKB-UniRule"/>
</dbReference>
<dbReference type="GO" id="GO:0051539">
    <property type="term" value="F:4 iron, 4 sulfur cluster binding"/>
    <property type="evidence" value="ECO:0007669"/>
    <property type="project" value="UniProtKB-KW"/>
</dbReference>
<dbReference type="GO" id="GO:0009055">
    <property type="term" value="F:electron transfer activity"/>
    <property type="evidence" value="ECO:0007669"/>
    <property type="project" value="UniProtKB-UniRule"/>
</dbReference>
<dbReference type="GO" id="GO:0046872">
    <property type="term" value="F:metal ion binding"/>
    <property type="evidence" value="ECO:0007669"/>
    <property type="project" value="UniProtKB-KW"/>
</dbReference>
<dbReference type="GO" id="GO:0016226">
    <property type="term" value="P:iron-sulfur cluster assembly"/>
    <property type="evidence" value="ECO:0007669"/>
    <property type="project" value="UniProtKB-UniRule"/>
</dbReference>
<dbReference type="Gene3D" id="3.40.50.150">
    <property type="entry name" value="Vaccinia Virus protein VP39"/>
    <property type="match status" value="1"/>
</dbReference>
<dbReference type="HAMAP" id="MF_03115">
    <property type="entry name" value="Anamorsin"/>
    <property type="match status" value="1"/>
</dbReference>
<dbReference type="InterPro" id="IPR007785">
    <property type="entry name" value="Anamorsin"/>
</dbReference>
<dbReference type="InterPro" id="IPR049011">
    <property type="entry name" value="Anamorsin_N_metazoan"/>
</dbReference>
<dbReference type="InterPro" id="IPR046408">
    <property type="entry name" value="CIAPIN1"/>
</dbReference>
<dbReference type="InterPro" id="IPR029063">
    <property type="entry name" value="SAM-dependent_MTases_sf"/>
</dbReference>
<dbReference type="PANTHER" id="PTHR13273">
    <property type="entry name" value="ANAMORSIN"/>
    <property type="match status" value="1"/>
</dbReference>
<dbReference type="PANTHER" id="PTHR13273:SF14">
    <property type="entry name" value="ANAMORSIN"/>
    <property type="match status" value="1"/>
</dbReference>
<dbReference type="Pfam" id="PF20922">
    <property type="entry name" value="Anamorsin_N"/>
    <property type="match status" value="1"/>
</dbReference>
<dbReference type="Pfam" id="PF05093">
    <property type="entry name" value="CIAPIN1"/>
    <property type="match status" value="2"/>
</dbReference>
<sequence length="249" mass="27067">MEQFKDLQKSLYIWTDSGELDKRVQTIKEATGGEVAVENVHRLSFSSYANSSFDLIVIECAQLTDNYVKLLHMLKPSGKLHLIAYIGTPASLLQEIKLSGFINCGEDTAANTLTAEKPGYETGSAARLSFAKKAAGVNVWKISGDDEELIDEEDLLDEADKQKPDPSGLRVCSTTGKRKACKNCSCGLAEELESERTTSSANTENAKSSCGNCYLGDAFRCSTCPYLGMPAFKPGEKVQLANNLLKSDI</sequence>
<comment type="function">
    <text evidence="1">Component of the cytosolic iron-sulfur (Fe-S) protein assembly (CIA) machinery. Required for the maturation of extramitochondrial Fe-S proteins. Part of an electron transfer chain functioning in an early step of cytosolic Fe-S biogenesis, facilitating the de novo assembly of a [4Fe-4S] cluster on the cytosolic Fe-S scaffold complex. Electrons are transferred from NADPH via a FAD- and FMN-containing diflavin oxidoreductase. Together with the diflavin oxidoreductase, also required for the assembly of the diferric tyrosyl radical cofactor of ribonucleotide reductase (RNR), probably by providing electrons for reduction during radical cofactor maturation in the catalytic small subunit.</text>
</comment>
<comment type="cofactor">
    <cofactor evidence="1">
        <name>[2Fe-2S] cluster</name>
        <dbReference type="ChEBI" id="CHEBI:190135"/>
    </cofactor>
</comment>
<comment type="cofactor">
    <cofactor evidence="1">
        <name>[4Fe-4S] cluster</name>
        <dbReference type="ChEBI" id="CHEBI:49883"/>
    </cofactor>
</comment>
<comment type="subunit">
    <text evidence="1">Monomer.</text>
</comment>
<comment type="subcellular location">
    <subcellularLocation>
        <location evidence="1">Cytoplasm</location>
    </subcellularLocation>
    <subcellularLocation>
        <location evidence="1">Mitochondrion intermembrane space</location>
    </subcellularLocation>
</comment>
<comment type="domain">
    <text evidence="1">The C-terminal domain binds 2 Fe-S clusters but is otherwise mostly in an intrinsically disordered conformation.</text>
</comment>
<comment type="domain">
    <text evidence="1">The N-terminal domain has structural similarity with S-adenosyl-L-methionine-dependent methyltransferases, but does not bind S-adenosyl-L-methionine. It is required for correct assembly of the 2 Fe-S clusters.</text>
</comment>
<comment type="domain">
    <text evidence="1">The twin Cx2C motifs are involved in the recognition by the mitochondrial MIA40-ERV1 disulfide relay system. The formation of 2 disulfide bonds in the Cx2C motifs through dithiol/disulfide exchange reactions effectively traps the protein in the mitochondrial intermembrane space.</text>
</comment>
<comment type="similarity">
    <text evidence="1">Belongs to the anamorsin family.</text>
</comment>
<proteinExistence type="inferred from homology"/>
<name>DRE2_DROGR</name>
<feature type="chain" id="PRO_0000392316" description="Anamorsin homolog">
    <location>
        <begin position="1"/>
        <end position="249"/>
    </location>
</feature>
<feature type="region of interest" description="N-terminal SAM-like domain" evidence="1">
    <location>
        <begin position="1"/>
        <end position="130"/>
    </location>
</feature>
<feature type="region of interest" description="Linker" evidence="1">
    <location>
        <begin position="131"/>
        <end position="161"/>
    </location>
</feature>
<feature type="region of interest" description="Fe-S binding site A" evidence="1">
    <location>
        <begin position="172"/>
        <end position="186"/>
    </location>
</feature>
<feature type="region of interest" description="Fe-S binding site B" evidence="1">
    <location>
        <begin position="210"/>
        <end position="224"/>
    </location>
</feature>
<feature type="short sequence motif" description="Cx2C motif 1" evidence="1">
    <location>
        <begin position="210"/>
        <end position="213"/>
    </location>
</feature>
<feature type="short sequence motif" description="Cx2C motif 2" evidence="1">
    <location>
        <begin position="221"/>
        <end position="224"/>
    </location>
</feature>
<feature type="binding site" evidence="1">
    <location>
        <position position="172"/>
    </location>
    <ligand>
        <name>[2Fe-2S] cluster</name>
        <dbReference type="ChEBI" id="CHEBI:190135"/>
    </ligand>
</feature>
<feature type="binding site" evidence="1">
    <location>
        <position position="181"/>
    </location>
    <ligand>
        <name>[2Fe-2S] cluster</name>
        <dbReference type="ChEBI" id="CHEBI:190135"/>
    </ligand>
</feature>
<feature type="binding site" evidence="1">
    <location>
        <position position="184"/>
    </location>
    <ligand>
        <name>[2Fe-2S] cluster</name>
        <dbReference type="ChEBI" id="CHEBI:190135"/>
    </ligand>
</feature>
<feature type="binding site" evidence="1">
    <location>
        <position position="186"/>
    </location>
    <ligand>
        <name>[2Fe-2S] cluster</name>
        <dbReference type="ChEBI" id="CHEBI:190135"/>
    </ligand>
</feature>
<feature type="binding site" evidence="1">
    <location>
        <position position="210"/>
    </location>
    <ligand>
        <name>[4Fe-4S] cluster</name>
        <dbReference type="ChEBI" id="CHEBI:49883"/>
    </ligand>
</feature>
<feature type="binding site" evidence="1">
    <location>
        <position position="213"/>
    </location>
    <ligand>
        <name>[4Fe-4S] cluster</name>
        <dbReference type="ChEBI" id="CHEBI:49883"/>
    </ligand>
</feature>
<feature type="binding site" evidence="1">
    <location>
        <position position="221"/>
    </location>
    <ligand>
        <name>[4Fe-4S] cluster</name>
        <dbReference type="ChEBI" id="CHEBI:49883"/>
    </ligand>
</feature>
<feature type="binding site" evidence="1">
    <location>
        <position position="224"/>
    </location>
    <ligand>
        <name>[4Fe-4S] cluster</name>
        <dbReference type="ChEBI" id="CHEBI:49883"/>
    </ligand>
</feature>
<organism>
    <name type="scientific">Drosophila grimshawi</name>
    <name type="common">Hawaiian fruit fly</name>
    <name type="synonym">Idiomyia grimshawi</name>
    <dbReference type="NCBI Taxonomy" id="7222"/>
    <lineage>
        <taxon>Eukaryota</taxon>
        <taxon>Metazoa</taxon>
        <taxon>Ecdysozoa</taxon>
        <taxon>Arthropoda</taxon>
        <taxon>Hexapoda</taxon>
        <taxon>Insecta</taxon>
        <taxon>Pterygota</taxon>
        <taxon>Neoptera</taxon>
        <taxon>Endopterygota</taxon>
        <taxon>Diptera</taxon>
        <taxon>Brachycera</taxon>
        <taxon>Muscomorpha</taxon>
        <taxon>Ephydroidea</taxon>
        <taxon>Drosophilidae</taxon>
        <taxon>Drosophila</taxon>
        <taxon>Hawaiian Drosophila</taxon>
    </lineage>
</organism>
<protein>
    <recommendedName>
        <fullName evidence="1">Anamorsin homolog</fullName>
    </recommendedName>
    <alternativeName>
        <fullName evidence="1">Fe-S cluster assembly protein DRE2 homolog</fullName>
    </alternativeName>
</protein>
<gene>
    <name evidence="1" type="primary">CIAPIN1</name>
    <name evidence="1" type="synonym">l(2)35Bg</name>
    <name type="ORF">GH10820</name>
</gene>
<reference key="1">
    <citation type="journal article" date="2007" name="Nature">
        <title>Evolution of genes and genomes on the Drosophila phylogeny.</title>
        <authorList>
            <consortium name="Drosophila 12 genomes consortium"/>
        </authorList>
    </citation>
    <scope>NUCLEOTIDE SEQUENCE [LARGE SCALE GENOMIC DNA]</scope>
    <source>
        <strain>Tucson 15287-2541.00</strain>
    </source>
</reference>